<name>PYRG_HALS3</name>
<reference key="1">
    <citation type="journal article" date="2008" name="Genomics">
        <title>Evolution in the laboratory: the genome of Halobacterium salinarum strain R1 compared to that of strain NRC-1.</title>
        <authorList>
            <person name="Pfeiffer F."/>
            <person name="Schuster S.C."/>
            <person name="Broicher A."/>
            <person name="Falb M."/>
            <person name="Palm P."/>
            <person name="Rodewald K."/>
            <person name="Ruepp A."/>
            <person name="Soppa J."/>
            <person name="Tittor J."/>
            <person name="Oesterhelt D."/>
        </authorList>
    </citation>
    <scope>NUCLEOTIDE SEQUENCE [LARGE SCALE GENOMIC DNA]</scope>
    <source>
        <strain>ATCC 29341 / DSM 671 / R1</strain>
    </source>
</reference>
<keyword id="KW-0067">ATP-binding</keyword>
<keyword id="KW-0315">Glutamine amidotransferase</keyword>
<keyword id="KW-0436">Ligase</keyword>
<keyword id="KW-0460">Magnesium</keyword>
<keyword id="KW-0479">Metal-binding</keyword>
<keyword id="KW-0547">Nucleotide-binding</keyword>
<keyword id="KW-0665">Pyrimidine biosynthesis</keyword>
<sequence length="553" mass="61109">MPTETEYDPSLGSKFVFVTGGVMSGLGKGITAASLGRLLSNAGFDVTAVKIDPYLNVDAGTMNPYQHGEVYVLDDGGEVDLDLGNYERFLDEDMTSDHNVTTGKVYQDVIERERSGDYLGKTVQIIPHVTDDIKRRVREAAEGSDVCLVEVGGTVGDIEGMPFLEALRQFSHEQDDEDILFTHVTLVPYSKNGEQKTKPTQHSVKELRSIGLQPDILVGRCEDRLDPDVREKIALFCDVPMDAVFSNPDVEDIYHVPLTVEEEGLDQYVMEQFDMVEDALPAAQRSTEWRDLVTRERTGEVDIALVGKYALEDAYMSIHEALKHASLEAGVEVNVLWVDSEKMHDHHERRIADADGIVVAGGFGSRGTAGKIDAIQHAREHDVPFLGLCLGFQLAVVEYARNVLGMTGAHSAEIDEDTEYPVIDLLPEQYDLEDLGGTMRLGAHETAIEPGTLAHDLYGATSCTERHRHRYEVNPEYIDDLTADGLTFSGEAGNRMEIVEHDDHPFFFGTQFHPEYRSRPTRASPPFVGLLDAVLERADVAPAGSDADVEVTN</sequence>
<organism>
    <name type="scientific">Halobacterium salinarum (strain ATCC 29341 / DSM 671 / R1)</name>
    <dbReference type="NCBI Taxonomy" id="478009"/>
    <lineage>
        <taxon>Archaea</taxon>
        <taxon>Methanobacteriati</taxon>
        <taxon>Methanobacteriota</taxon>
        <taxon>Stenosarchaea group</taxon>
        <taxon>Halobacteria</taxon>
        <taxon>Halobacteriales</taxon>
        <taxon>Halobacteriaceae</taxon>
        <taxon>Halobacterium</taxon>
        <taxon>Halobacterium salinarum NRC-34001</taxon>
    </lineage>
</organism>
<protein>
    <recommendedName>
        <fullName evidence="1">CTP synthase</fullName>
        <ecNumber evidence="1">6.3.4.2</ecNumber>
    </recommendedName>
    <alternativeName>
        <fullName evidence="1">Cytidine 5'-triphosphate synthase</fullName>
    </alternativeName>
    <alternativeName>
        <fullName evidence="1">Cytidine triphosphate synthetase</fullName>
        <shortName evidence="1">CTP synthetase</shortName>
        <shortName evidence="1">CTPS</shortName>
    </alternativeName>
    <alternativeName>
        <fullName evidence="1">UTP--ammonia ligase</fullName>
    </alternativeName>
</protein>
<accession>B0R6G2</accession>
<feature type="chain" id="PRO_1000139470" description="CTP synthase">
    <location>
        <begin position="1"/>
        <end position="553"/>
    </location>
</feature>
<feature type="domain" description="Glutamine amidotransferase type-1" evidence="1">
    <location>
        <begin position="308"/>
        <end position="540"/>
    </location>
</feature>
<feature type="region of interest" description="Amidoligase domain" evidence="1">
    <location>
        <begin position="1"/>
        <end position="275"/>
    </location>
</feature>
<feature type="active site" description="Nucleophile; for glutamine hydrolysis" evidence="1">
    <location>
        <position position="389"/>
    </location>
</feature>
<feature type="active site" evidence="1">
    <location>
        <position position="513"/>
    </location>
</feature>
<feature type="active site" evidence="1">
    <location>
        <position position="515"/>
    </location>
</feature>
<feature type="binding site" evidence="1">
    <location>
        <position position="24"/>
    </location>
    <ligand>
        <name>CTP</name>
        <dbReference type="ChEBI" id="CHEBI:37563"/>
        <note>allosteric inhibitor</note>
    </ligand>
</feature>
<feature type="binding site" evidence="1">
    <location>
        <position position="24"/>
    </location>
    <ligand>
        <name>UTP</name>
        <dbReference type="ChEBI" id="CHEBI:46398"/>
    </ligand>
</feature>
<feature type="binding site" evidence="1">
    <location>
        <begin position="25"/>
        <end position="30"/>
    </location>
    <ligand>
        <name>ATP</name>
        <dbReference type="ChEBI" id="CHEBI:30616"/>
    </ligand>
</feature>
<feature type="binding site" evidence="1">
    <location>
        <position position="65"/>
    </location>
    <ligand>
        <name>L-glutamine</name>
        <dbReference type="ChEBI" id="CHEBI:58359"/>
    </ligand>
</feature>
<feature type="binding site" evidence="1">
    <location>
        <position position="82"/>
    </location>
    <ligand>
        <name>ATP</name>
        <dbReference type="ChEBI" id="CHEBI:30616"/>
    </ligand>
</feature>
<feature type="binding site" evidence="1">
    <location>
        <position position="82"/>
    </location>
    <ligand>
        <name>Mg(2+)</name>
        <dbReference type="ChEBI" id="CHEBI:18420"/>
    </ligand>
</feature>
<feature type="binding site" evidence="1">
    <location>
        <position position="150"/>
    </location>
    <ligand>
        <name>Mg(2+)</name>
        <dbReference type="ChEBI" id="CHEBI:18420"/>
    </ligand>
</feature>
<feature type="binding site" evidence="1">
    <location>
        <begin position="157"/>
        <end position="159"/>
    </location>
    <ligand>
        <name>CTP</name>
        <dbReference type="ChEBI" id="CHEBI:37563"/>
        <note>allosteric inhibitor</note>
    </ligand>
</feature>
<feature type="binding site" evidence="1">
    <location>
        <begin position="196"/>
        <end position="201"/>
    </location>
    <ligand>
        <name>CTP</name>
        <dbReference type="ChEBI" id="CHEBI:37563"/>
        <note>allosteric inhibitor</note>
    </ligand>
</feature>
<feature type="binding site" evidence="1">
    <location>
        <begin position="196"/>
        <end position="201"/>
    </location>
    <ligand>
        <name>UTP</name>
        <dbReference type="ChEBI" id="CHEBI:46398"/>
    </ligand>
</feature>
<feature type="binding site" evidence="1">
    <location>
        <position position="232"/>
    </location>
    <ligand>
        <name>CTP</name>
        <dbReference type="ChEBI" id="CHEBI:37563"/>
        <note>allosteric inhibitor</note>
    </ligand>
</feature>
<feature type="binding site" evidence="1">
    <location>
        <position position="232"/>
    </location>
    <ligand>
        <name>UTP</name>
        <dbReference type="ChEBI" id="CHEBI:46398"/>
    </ligand>
</feature>
<feature type="binding site" evidence="1">
    <location>
        <position position="362"/>
    </location>
    <ligand>
        <name>L-glutamine</name>
        <dbReference type="ChEBI" id="CHEBI:58359"/>
    </ligand>
</feature>
<feature type="binding site" evidence="1">
    <location>
        <begin position="390"/>
        <end position="393"/>
    </location>
    <ligand>
        <name>L-glutamine</name>
        <dbReference type="ChEBI" id="CHEBI:58359"/>
    </ligand>
</feature>
<feature type="binding site" evidence="1">
    <location>
        <position position="413"/>
    </location>
    <ligand>
        <name>L-glutamine</name>
        <dbReference type="ChEBI" id="CHEBI:58359"/>
    </ligand>
</feature>
<feature type="binding site" evidence="1">
    <location>
        <position position="470"/>
    </location>
    <ligand>
        <name>L-glutamine</name>
        <dbReference type="ChEBI" id="CHEBI:58359"/>
    </ligand>
</feature>
<evidence type="ECO:0000255" key="1">
    <source>
        <dbReference type="HAMAP-Rule" id="MF_01227"/>
    </source>
</evidence>
<dbReference type="EC" id="6.3.4.2" evidence="1"/>
<dbReference type="EMBL" id="AM774415">
    <property type="protein sequence ID" value="CAP14331.1"/>
    <property type="molecule type" value="Genomic_DNA"/>
</dbReference>
<dbReference type="RefSeq" id="WP_010903337.1">
    <property type="nucleotide sequence ID" value="NC_010364.1"/>
</dbReference>
<dbReference type="SMR" id="B0R6G2"/>
<dbReference type="MEROPS" id="C26.964"/>
<dbReference type="EnsemblBacteria" id="CAP14331">
    <property type="protein sequence ID" value="CAP14331"/>
    <property type="gene ID" value="OE_3572R"/>
</dbReference>
<dbReference type="KEGG" id="hsl:OE_3572R"/>
<dbReference type="HOGENOM" id="CLU_011675_5_0_2"/>
<dbReference type="PhylomeDB" id="B0R6G2"/>
<dbReference type="UniPathway" id="UPA00159">
    <property type="reaction ID" value="UER00277"/>
</dbReference>
<dbReference type="Proteomes" id="UP000001321">
    <property type="component" value="Chromosome"/>
</dbReference>
<dbReference type="GO" id="GO:0005524">
    <property type="term" value="F:ATP binding"/>
    <property type="evidence" value="ECO:0007669"/>
    <property type="project" value="UniProtKB-KW"/>
</dbReference>
<dbReference type="GO" id="GO:0003883">
    <property type="term" value="F:CTP synthase activity"/>
    <property type="evidence" value="ECO:0007669"/>
    <property type="project" value="UniProtKB-UniRule"/>
</dbReference>
<dbReference type="GO" id="GO:0004359">
    <property type="term" value="F:glutaminase activity"/>
    <property type="evidence" value="ECO:0007669"/>
    <property type="project" value="RHEA"/>
</dbReference>
<dbReference type="GO" id="GO:0042802">
    <property type="term" value="F:identical protein binding"/>
    <property type="evidence" value="ECO:0007669"/>
    <property type="project" value="TreeGrafter"/>
</dbReference>
<dbReference type="GO" id="GO:0046872">
    <property type="term" value="F:metal ion binding"/>
    <property type="evidence" value="ECO:0007669"/>
    <property type="project" value="UniProtKB-KW"/>
</dbReference>
<dbReference type="GO" id="GO:0044210">
    <property type="term" value="P:'de novo' CTP biosynthetic process"/>
    <property type="evidence" value="ECO:0007669"/>
    <property type="project" value="UniProtKB-UniRule"/>
</dbReference>
<dbReference type="GO" id="GO:0019856">
    <property type="term" value="P:pyrimidine nucleobase biosynthetic process"/>
    <property type="evidence" value="ECO:0007669"/>
    <property type="project" value="TreeGrafter"/>
</dbReference>
<dbReference type="CDD" id="cd03113">
    <property type="entry name" value="CTPS_N"/>
    <property type="match status" value="1"/>
</dbReference>
<dbReference type="CDD" id="cd01746">
    <property type="entry name" value="GATase1_CTP_Synthase"/>
    <property type="match status" value="1"/>
</dbReference>
<dbReference type="FunFam" id="3.40.50.300:FF:000009">
    <property type="entry name" value="CTP synthase"/>
    <property type="match status" value="1"/>
</dbReference>
<dbReference type="FunFam" id="3.40.50.880:FF:000002">
    <property type="entry name" value="CTP synthase"/>
    <property type="match status" value="1"/>
</dbReference>
<dbReference type="Gene3D" id="3.40.50.880">
    <property type="match status" value="1"/>
</dbReference>
<dbReference type="Gene3D" id="3.40.50.300">
    <property type="entry name" value="P-loop containing nucleotide triphosphate hydrolases"/>
    <property type="match status" value="1"/>
</dbReference>
<dbReference type="HAMAP" id="MF_01227">
    <property type="entry name" value="PyrG"/>
    <property type="match status" value="1"/>
</dbReference>
<dbReference type="InterPro" id="IPR029062">
    <property type="entry name" value="Class_I_gatase-like"/>
</dbReference>
<dbReference type="InterPro" id="IPR004468">
    <property type="entry name" value="CTP_synthase"/>
</dbReference>
<dbReference type="InterPro" id="IPR017456">
    <property type="entry name" value="CTP_synthase_N"/>
</dbReference>
<dbReference type="InterPro" id="IPR017926">
    <property type="entry name" value="GATASE"/>
</dbReference>
<dbReference type="InterPro" id="IPR033828">
    <property type="entry name" value="GATase1_CTP_Synthase"/>
</dbReference>
<dbReference type="InterPro" id="IPR027417">
    <property type="entry name" value="P-loop_NTPase"/>
</dbReference>
<dbReference type="NCBIfam" id="NF003792">
    <property type="entry name" value="PRK05380.1"/>
    <property type="match status" value="1"/>
</dbReference>
<dbReference type="NCBIfam" id="TIGR00337">
    <property type="entry name" value="PyrG"/>
    <property type="match status" value="1"/>
</dbReference>
<dbReference type="PANTHER" id="PTHR11550">
    <property type="entry name" value="CTP SYNTHASE"/>
    <property type="match status" value="1"/>
</dbReference>
<dbReference type="PANTHER" id="PTHR11550:SF0">
    <property type="entry name" value="CTP SYNTHASE-RELATED"/>
    <property type="match status" value="1"/>
</dbReference>
<dbReference type="Pfam" id="PF06418">
    <property type="entry name" value="CTP_synth_N"/>
    <property type="match status" value="1"/>
</dbReference>
<dbReference type="Pfam" id="PF00117">
    <property type="entry name" value="GATase"/>
    <property type="match status" value="1"/>
</dbReference>
<dbReference type="SUPFAM" id="SSF52317">
    <property type="entry name" value="Class I glutamine amidotransferase-like"/>
    <property type="match status" value="1"/>
</dbReference>
<dbReference type="SUPFAM" id="SSF52540">
    <property type="entry name" value="P-loop containing nucleoside triphosphate hydrolases"/>
    <property type="match status" value="1"/>
</dbReference>
<dbReference type="PROSITE" id="PS51273">
    <property type="entry name" value="GATASE_TYPE_1"/>
    <property type="match status" value="1"/>
</dbReference>
<comment type="function">
    <text evidence="1">Catalyzes the ATP-dependent amination of UTP to CTP with either L-glutamine or ammonia as the source of nitrogen. Regulates intracellular CTP levels through interactions with the four ribonucleotide triphosphates.</text>
</comment>
<comment type="catalytic activity">
    <reaction evidence="1">
        <text>UTP + L-glutamine + ATP + H2O = CTP + L-glutamate + ADP + phosphate + 2 H(+)</text>
        <dbReference type="Rhea" id="RHEA:26426"/>
        <dbReference type="ChEBI" id="CHEBI:15377"/>
        <dbReference type="ChEBI" id="CHEBI:15378"/>
        <dbReference type="ChEBI" id="CHEBI:29985"/>
        <dbReference type="ChEBI" id="CHEBI:30616"/>
        <dbReference type="ChEBI" id="CHEBI:37563"/>
        <dbReference type="ChEBI" id="CHEBI:43474"/>
        <dbReference type="ChEBI" id="CHEBI:46398"/>
        <dbReference type="ChEBI" id="CHEBI:58359"/>
        <dbReference type="ChEBI" id="CHEBI:456216"/>
        <dbReference type="EC" id="6.3.4.2"/>
    </reaction>
</comment>
<comment type="catalytic activity">
    <reaction evidence="1">
        <text>L-glutamine + H2O = L-glutamate + NH4(+)</text>
        <dbReference type="Rhea" id="RHEA:15889"/>
        <dbReference type="ChEBI" id="CHEBI:15377"/>
        <dbReference type="ChEBI" id="CHEBI:28938"/>
        <dbReference type="ChEBI" id="CHEBI:29985"/>
        <dbReference type="ChEBI" id="CHEBI:58359"/>
    </reaction>
</comment>
<comment type="catalytic activity">
    <reaction evidence="1">
        <text>UTP + NH4(+) + ATP = CTP + ADP + phosphate + 2 H(+)</text>
        <dbReference type="Rhea" id="RHEA:16597"/>
        <dbReference type="ChEBI" id="CHEBI:15378"/>
        <dbReference type="ChEBI" id="CHEBI:28938"/>
        <dbReference type="ChEBI" id="CHEBI:30616"/>
        <dbReference type="ChEBI" id="CHEBI:37563"/>
        <dbReference type="ChEBI" id="CHEBI:43474"/>
        <dbReference type="ChEBI" id="CHEBI:46398"/>
        <dbReference type="ChEBI" id="CHEBI:456216"/>
    </reaction>
</comment>
<comment type="activity regulation">
    <text evidence="1">Allosterically activated by GTP, when glutamine is the substrate; GTP has no effect on the reaction when ammonia is the substrate. The allosteric effector GTP functions by stabilizing the protein conformation that binds the tetrahedral intermediate(s) formed during glutamine hydrolysis. Inhibited by the product CTP, via allosteric rather than competitive inhibition.</text>
</comment>
<comment type="pathway">
    <text evidence="1">Pyrimidine metabolism; CTP biosynthesis via de novo pathway; CTP from UDP: step 2/2.</text>
</comment>
<comment type="subunit">
    <text evidence="1">Homotetramer.</text>
</comment>
<comment type="miscellaneous">
    <text evidence="1">CTPSs have evolved a hybrid strategy for distinguishing between UTP and CTP. The overlapping regions of the product feedback inhibitory and substrate sites recognize a common feature in both compounds, the triphosphate moiety. To differentiate isosteric substrate and product pyrimidine rings, an additional pocket far from the expected kinase/ligase catalytic site, specifically recognizes the cytosine and ribose portions of the product inhibitor.</text>
</comment>
<comment type="similarity">
    <text evidence="1">Belongs to the CTP synthase family.</text>
</comment>
<gene>
    <name evidence="1" type="primary">pyrG</name>
    <name type="ordered locus">OE_3572R</name>
</gene>
<proteinExistence type="inferred from homology"/>